<sequence>MQSGHYNRRQSRRQRISSNTTDSPRHTHGTRYRSTNWYTHPPQILSNSETLVAVQELLNSEMDQDSSSDASDDFPGYALHHSTYNGSEQNTSTSRHENRIFKLTEREANEEININTDAIDDEGEAEEGEAEEDAIDDEGEAEEGEAEEDAIDDEGEAEEGEAEEDAIDDEGEAEEGEAEEGEAEEGEAEEDAIDDEGEAEEDAAEEDAIDDEGEAEEDYFSVSQVCSRDADEVYFTLDPEISYSTDLRIAKVMEPAVSKELNVSKRCVEPVTLTGSMLAHNGFDESWFAMRECTRREYITVQGLYDPIHLRYQFDTSRMTPPQILRTIPALPNMTLGELLLIFPIEFMAQPISIERILVEDVFLDRRASSKTHKYGPRWNSVYALPYNAGKMYVQHIPGFYDVSLRAVGQGTAIWHHMILSTAACAISNRISHGDGLGFLLDAAIRISANCIFLGRNDNFGVGDPCWLEDHLAGLPREAVPDVLQVTQLVLPNRGPTVAIMRGFFGALAYWPELRIAISEPSTSLVRYATGHMELAEWFLFSRTHSLKPQFTPTEREMLASFFTLYVTLGGGMLNWICRATAMYLAAPYHSRSAYIAVCESLPYYYIPVNSDLLCDLEVLLLGEVDLPTVCESYATIAHELTGYEAVRTAATNFMIEFADCYKESETDLMVSAYLGAVLLLQRVLGHANLLLLLLSGAALYGGCSIYIPRGILDAYNTLMLAASPLYAHQTLTSFWKDRDDAMQTLGIRPTTDVLPKEQDRIVQASPIEMNFRFVGLETIYPREQPIPSVDLAENLMQYRNEILGLDWKSVAMHLLRKY</sequence>
<accession>P09263</accession>
<proteinExistence type="evidence at protein level"/>
<reference key="1">
    <citation type="journal article" date="1986" name="J. Gen. Virol.">
        <title>The complete DNA sequence of varicella-zoster virus.</title>
        <authorList>
            <person name="Davison A.J."/>
            <person name="Scott J.E."/>
        </authorList>
    </citation>
    <scope>NUCLEOTIDE SEQUENCE [LARGE SCALE GENOMIC DNA]</scope>
</reference>
<reference key="2">
    <citation type="journal article" date="2006" name="J. Virol.">
        <title>Characterization of a novel transferable CRM-1-independent nuclear export signal in a herpesvirus tegument protein that shuttles between the nucleus and cytoplasm.</title>
        <authorList>
            <person name="Verhagen J."/>
            <person name="Donnelly M."/>
            <person name="Elliott G."/>
        </authorList>
    </citation>
    <scope>SUBCELLULAR LOCATION</scope>
</reference>
<reference key="3">
    <citation type="journal article" date="2011" name="Virology">
        <title>Identification and functional characterization of the Varicella zoster virus ORF11 gene product.</title>
        <authorList>
            <person name="Che X."/>
            <person name="Oliver S.L."/>
            <person name="Sommer M.H."/>
            <person name="Rajamani J."/>
            <person name="Reichelt M."/>
            <person name="Arvin A.M."/>
        </authorList>
    </citation>
    <scope>FUNCTION</scope>
    <scope>SUBCELLULAR LOCATION</scope>
</reference>
<reference key="4">
    <citation type="journal article" date="2013" name="J. Virol.">
        <title>ORF11 protein interacts with the ORF9 essential tegument protein in varicella-zoster virus infection.</title>
        <authorList>
            <person name="Che X."/>
            <person name="Oliver S.L."/>
            <person name="Reichelt M."/>
            <person name="Sommer M.H."/>
            <person name="Haas J."/>
            <person name="Rovis T.L."/>
            <person name="Arvin A.M."/>
        </authorList>
    </citation>
    <scope>INTERACTION WITH ORF9</scope>
</reference>
<name>TEG5_VZVD</name>
<feature type="chain" id="PRO_0000116080" description="Tegument protein UL47 homolog">
    <location>
        <begin position="1"/>
        <end position="819"/>
    </location>
</feature>
<feature type="repeat" description="1-1">
    <location>
        <begin position="117"/>
        <end position="132"/>
    </location>
</feature>
<feature type="repeat" description="1-2">
    <location>
        <begin position="133"/>
        <end position="148"/>
    </location>
</feature>
<feature type="repeat" description="1-3">
    <location>
        <begin position="149"/>
        <end position="164"/>
    </location>
</feature>
<feature type="repeat" description="1-4">
    <location>
        <begin position="165"/>
        <end position="190"/>
    </location>
</feature>
<feature type="repeat" description="1-5">
    <location>
        <begin position="191"/>
        <end position="206"/>
    </location>
</feature>
<feature type="repeat" description="1-6; truncated">
    <location>
        <begin position="207"/>
        <end position="218"/>
    </location>
</feature>
<feature type="region of interest" description="Disordered" evidence="4">
    <location>
        <begin position="1"/>
        <end position="42"/>
    </location>
</feature>
<feature type="region of interest" description="Disordered" evidence="4">
    <location>
        <begin position="58"/>
        <end position="221"/>
    </location>
</feature>
<feature type="region of interest" description="6 X 16 AA approximate tandem repeats">
    <location>
        <begin position="117"/>
        <end position="218"/>
    </location>
</feature>
<feature type="short sequence motif" description="Nuclear localization signal" evidence="3">
    <location>
        <begin position="11"/>
        <end position="31"/>
    </location>
</feature>
<feature type="short sequence motif" description="Nuclear export signal" evidence="1">
    <location>
        <begin position="785"/>
        <end position="807"/>
    </location>
</feature>
<feature type="compositionally biased region" description="Basic residues" evidence="4">
    <location>
        <begin position="1"/>
        <end position="15"/>
    </location>
</feature>
<feature type="compositionally biased region" description="Polar residues" evidence="4">
    <location>
        <begin position="32"/>
        <end position="42"/>
    </location>
</feature>
<feature type="compositionally biased region" description="Acidic residues" evidence="4">
    <location>
        <begin position="62"/>
        <end position="72"/>
    </location>
</feature>
<feature type="compositionally biased region" description="Polar residues" evidence="4">
    <location>
        <begin position="82"/>
        <end position="93"/>
    </location>
</feature>
<feature type="compositionally biased region" description="Basic and acidic residues" evidence="4">
    <location>
        <begin position="94"/>
        <end position="109"/>
    </location>
</feature>
<feature type="compositionally biased region" description="Acidic residues" evidence="4">
    <location>
        <begin position="118"/>
        <end position="219"/>
    </location>
</feature>
<gene>
    <name type="ORF">ORF11</name>
</gene>
<keyword id="KW-1035">Host cytoplasm</keyword>
<keyword id="KW-1048">Host nucleus</keyword>
<keyword id="KW-0426">Late protein</keyword>
<keyword id="KW-1185">Reference proteome</keyword>
<keyword id="KW-0677">Repeat</keyword>
<keyword id="KW-0694">RNA-binding</keyword>
<keyword id="KW-0804">Transcription</keyword>
<keyword id="KW-0805">Transcription regulation</keyword>
<keyword id="KW-0946">Virion</keyword>
<keyword id="KW-0920">Virion tegument</keyword>
<organism>
    <name type="scientific">Varicella-zoster virus (strain Dumas)</name>
    <name type="common">HHV-3</name>
    <name type="synonym">Human herpesvirus 3</name>
    <dbReference type="NCBI Taxonomy" id="10338"/>
    <lineage>
        <taxon>Viruses</taxon>
        <taxon>Duplodnaviria</taxon>
        <taxon>Heunggongvirae</taxon>
        <taxon>Peploviricota</taxon>
        <taxon>Herviviricetes</taxon>
        <taxon>Herpesvirales</taxon>
        <taxon>Orthoherpesviridae</taxon>
        <taxon>Alphaherpesvirinae</taxon>
        <taxon>Varicellovirus</taxon>
        <taxon>Varicellovirus humanalpha3</taxon>
        <taxon>Human herpesvirus 3</taxon>
    </lineage>
</organism>
<evidence type="ECO:0000250" key="1"/>
<evidence type="ECO:0000250" key="2">
    <source>
        <dbReference type="UniProtKB" id="P10231"/>
    </source>
</evidence>
<evidence type="ECO:0000255" key="3"/>
<evidence type="ECO:0000256" key="4">
    <source>
        <dbReference type="SAM" id="MobiDB-lite"/>
    </source>
</evidence>
<evidence type="ECO:0000269" key="5">
    <source>
    </source>
</evidence>
<evidence type="ECO:0000269" key="6">
    <source>
    </source>
</evidence>
<evidence type="ECO:0000305" key="7"/>
<protein>
    <recommendedName>
        <fullName>Tegument protein UL47 homolog</fullName>
    </recommendedName>
</protein>
<organismHost>
    <name type="scientific">Homo sapiens</name>
    <name type="common">Human</name>
    <dbReference type="NCBI Taxonomy" id="9606"/>
</organismHost>
<dbReference type="EMBL" id="X04370">
    <property type="protein sequence ID" value="CAA27894.1"/>
    <property type="molecule type" value="Genomic_DNA"/>
</dbReference>
<dbReference type="PIR" id="B27342">
    <property type="entry name" value="TNBE11"/>
</dbReference>
<dbReference type="Proteomes" id="UP000002602">
    <property type="component" value="Genome"/>
</dbReference>
<dbReference type="GO" id="GO:0030430">
    <property type="term" value="C:host cell cytoplasm"/>
    <property type="evidence" value="ECO:0007669"/>
    <property type="project" value="UniProtKB-SubCell"/>
</dbReference>
<dbReference type="GO" id="GO:0042025">
    <property type="term" value="C:host cell nucleus"/>
    <property type="evidence" value="ECO:0007669"/>
    <property type="project" value="UniProtKB-SubCell"/>
</dbReference>
<dbReference type="GO" id="GO:0019033">
    <property type="term" value="C:viral tegument"/>
    <property type="evidence" value="ECO:0007669"/>
    <property type="project" value="UniProtKB-SubCell"/>
</dbReference>
<dbReference type="GO" id="GO:0003723">
    <property type="term" value="F:RNA binding"/>
    <property type="evidence" value="ECO:0007669"/>
    <property type="project" value="UniProtKB-KW"/>
</dbReference>
<dbReference type="GO" id="GO:0006355">
    <property type="term" value="P:regulation of DNA-templated transcription"/>
    <property type="evidence" value="ECO:0007669"/>
    <property type="project" value="InterPro"/>
</dbReference>
<dbReference type="InterPro" id="IPR005029">
    <property type="entry name" value="Herpes_UL47"/>
</dbReference>
<dbReference type="Pfam" id="PF03362">
    <property type="entry name" value="Herpes_UL47"/>
    <property type="match status" value="1"/>
</dbReference>
<comment type="function">
    <text evidence="2 5">Tegument protein that can bind to various RNA transcripts. Plays a role in the attenuation of selective viral and cellular mRNA degradation by modulating the activity of host shutoff RNase ORF17/VHS. Also plays a role in the primary envelopment of virions in the perinuclear space, probably by interacting with two nuclear egress proteins ORF24 and ORF27.</text>
</comment>
<comment type="subunit">
    <text evidence="2 6">Interacts with US3 kinase. Interacts with ORF24 and ORF27; these interactions seem important for efficient virion nuclear egress. Interacts with ORF17/VHS. Interacts with ORF9.</text>
</comment>
<comment type="subcellular location">
    <subcellularLocation>
        <location evidence="5">Virion tegument</location>
    </subcellularLocation>
    <subcellularLocation>
        <location evidence="5">Host nucleus</location>
    </subcellularLocation>
    <subcellularLocation>
        <location evidence="5">Host cytoplasm</location>
    </subcellularLocation>
    <text evidence="2">Major tegument protein of the virion. Undergoes nucleocytoplasmic shuttling during infection. Localizes to the major sites of transcription in the infected cell nucleus.</text>
</comment>
<comment type="domain">
    <text evidence="2">The nuclear export signal is CRM1-dependent.</text>
</comment>
<comment type="PTM">
    <text evidence="2">Phosphorylated by US3. This phosphorylation is required for proper nuclear localization.</text>
</comment>
<comment type="miscellaneous">
    <text evidence="1">Expressed in late in the infection.</text>
</comment>
<comment type="similarity">
    <text evidence="7">Belongs to the alphaherpesvirinae HHV-1 UL47 family.</text>
</comment>